<protein>
    <recommendedName>
        <fullName evidence="1">ATP synthase subunit beta</fullName>
        <ecNumber evidence="1">7.1.2.2</ecNumber>
    </recommendedName>
    <alternativeName>
        <fullName evidence="1">ATP synthase F1 sector subunit beta</fullName>
    </alternativeName>
    <alternativeName>
        <fullName evidence="1">F-ATPase subunit beta</fullName>
    </alternativeName>
</protein>
<accession>Q0I5X3</accession>
<evidence type="ECO:0000255" key="1">
    <source>
        <dbReference type="HAMAP-Rule" id="MF_01347"/>
    </source>
</evidence>
<comment type="function">
    <text evidence="1">Produces ATP from ADP in the presence of a proton gradient across the membrane. The catalytic sites are hosted primarily by the beta subunits.</text>
</comment>
<comment type="catalytic activity">
    <reaction evidence="1">
        <text>ATP + H2O + 4 H(+)(in) = ADP + phosphate + 5 H(+)(out)</text>
        <dbReference type="Rhea" id="RHEA:57720"/>
        <dbReference type="ChEBI" id="CHEBI:15377"/>
        <dbReference type="ChEBI" id="CHEBI:15378"/>
        <dbReference type="ChEBI" id="CHEBI:30616"/>
        <dbReference type="ChEBI" id="CHEBI:43474"/>
        <dbReference type="ChEBI" id="CHEBI:456216"/>
        <dbReference type="EC" id="7.1.2.2"/>
    </reaction>
</comment>
<comment type="subunit">
    <text evidence="1">F-type ATPases have 2 components, CF(1) - the catalytic core - and CF(0) - the membrane proton channel. CF(1) has five subunits: alpha(3), beta(3), gamma(1), delta(1), epsilon(1). CF(0) has three main subunits: a(1), b(2) and c(9-12). The alpha and beta chains form an alternating ring which encloses part of the gamma chain. CF(1) is attached to CF(0) by a central stalk formed by the gamma and epsilon chains, while a peripheral stalk is formed by the delta and b chains.</text>
</comment>
<comment type="subcellular location">
    <subcellularLocation>
        <location evidence="1">Cell inner membrane</location>
        <topology evidence="1">Peripheral membrane protein</topology>
    </subcellularLocation>
</comment>
<comment type="similarity">
    <text evidence="1">Belongs to the ATPase alpha/beta chains family.</text>
</comment>
<name>ATPB_HISS1</name>
<proteinExistence type="inferred from homology"/>
<keyword id="KW-0066">ATP synthesis</keyword>
<keyword id="KW-0067">ATP-binding</keyword>
<keyword id="KW-0997">Cell inner membrane</keyword>
<keyword id="KW-1003">Cell membrane</keyword>
<keyword id="KW-0139">CF(1)</keyword>
<keyword id="KW-0375">Hydrogen ion transport</keyword>
<keyword id="KW-0406">Ion transport</keyword>
<keyword id="KW-0472">Membrane</keyword>
<keyword id="KW-0547">Nucleotide-binding</keyword>
<keyword id="KW-1278">Translocase</keyword>
<keyword id="KW-0813">Transport</keyword>
<gene>
    <name evidence="1" type="primary">atpD</name>
    <name type="ordered locus">HS_1696</name>
</gene>
<reference key="1">
    <citation type="journal article" date="2007" name="J. Bacteriol.">
        <title>Complete genome sequence of Haemophilus somnus (Histophilus somni) strain 129Pt and comparison to Haemophilus ducreyi 35000HP and Haemophilus influenzae Rd.</title>
        <authorList>
            <person name="Challacombe J.F."/>
            <person name="Duncan A.J."/>
            <person name="Brettin T.S."/>
            <person name="Bruce D."/>
            <person name="Chertkov O."/>
            <person name="Detter J.C."/>
            <person name="Han C.S."/>
            <person name="Misra M."/>
            <person name="Richardson P."/>
            <person name="Tapia R."/>
            <person name="Thayer N."/>
            <person name="Xie G."/>
            <person name="Inzana T.J."/>
        </authorList>
    </citation>
    <scope>NUCLEOTIDE SEQUENCE [LARGE SCALE GENOMIC DNA]</scope>
    <source>
        <strain>129Pt</strain>
    </source>
</reference>
<sequence>MSAGKIIQIIGAVIDVEFPQNAVPKVYDALKVESGLTLEVQQQLGGGVVRCIALGSSDGLKRGLKVENTGNPISVPVGTKTLGRIMNVLGEPIDEKGEIGAEETWAIHRAAPSYEEQSNSTELLETGIKVIDLICPFAKGGKVGLFGGAGVGKTVNMMELIRNIAIEHSGYSVFAGVGERTREGNDFYHEMTESNVLDKVSLVYGQMNEPPGNRLRVALTGLTMAEKFRDEGRDVLFFVDNIYRYTLAGTEVSALLGRMPSAVGYQPTLAEEMGVLQERITSTKTGSITSVQAVYVPADDLTDPSPATTFAHLDSTVVLSRNIASLGIYPAVDPLDSTSRQLDPLVVGQEHYDVARGVQGILQRYKELKDIIAILGMDELSEDDKLVVARARKIERFLSQPFFVAEVFTGSPGKYVSLKDTIRGFKGILDGEYDHIPEQAFYMVGSIEEVLEKAKKM</sequence>
<feature type="chain" id="PRO_1000055120" description="ATP synthase subunit beta">
    <location>
        <begin position="1"/>
        <end position="457"/>
    </location>
</feature>
<feature type="binding site" evidence="1">
    <location>
        <begin position="147"/>
        <end position="154"/>
    </location>
    <ligand>
        <name>ATP</name>
        <dbReference type="ChEBI" id="CHEBI:30616"/>
    </ligand>
</feature>
<dbReference type="EC" id="7.1.2.2" evidence="1"/>
<dbReference type="EMBL" id="CP000436">
    <property type="protein sequence ID" value="ABI25964.1"/>
    <property type="molecule type" value="Genomic_DNA"/>
</dbReference>
<dbReference type="SMR" id="Q0I5X3"/>
<dbReference type="KEGG" id="hso:HS_1696"/>
<dbReference type="eggNOG" id="COG0055">
    <property type="taxonomic scope" value="Bacteria"/>
</dbReference>
<dbReference type="HOGENOM" id="CLU_022398_0_2_6"/>
<dbReference type="GO" id="GO:0005886">
    <property type="term" value="C:plasma membrane"/>
    <property type="evidence" value="ECO:0007669"/>
    <property type="project" value="UniProtKB-SubCell"/>
</dbReference>
<dbReference type="GO" id="GO:0045259">
    <property type="term" value="C:proton-transporting ATP synthase complex"/>
    <property type="evidence" value="ECO:0007669"/>
    <property type="project" value="UniProtKB-KW"/>
</dbReference>
<dbReference type="GO" id="GO:0005524">
    <property type="term" value="F:ATP binding"/>
    <property type="evidence" value="ECO:0007669"/>
    <property type="project" value="UniProtKB-UniRule"/>
</dbReference>
<dbReference type="GO" id="GO:0016887">
    <property type="term" value="F:ATP hydrolysis activity"/>
    <property type="evidence" value="ECO:0007669"/>
    <property type="project" value="InterPro"/>
</dbReference>
<dbReference type="GO" id="GO:0046933">
    <property type="term" value="F:proton-transporting ATP synthase activity, rotational mechanism"/>
    <property type="evidence" value="ECO:0007669"/>
    <property type="project" value="UniProtKB-UniRule"/>
</dbReference>
<dbReference type="CDD" id="cd18110">
    <property type="entry name" value="ATP-synt_F1_beta_C"/>
    <property type="match status" value="1"/>
</dbReference>
<dbReference type="CDD" id="cd18115">
    <property type="entry name" value="ATP-synt_F1_beta_N"/>
    <property type="match status" value="1"/>
</dbReference>
<dbReference type="CDD" id="cd01133">
    <property type="entry name" value="F1-ATPase_beta_CD"/>
    <property type="match status" value="1"/>
</dbReference>
<dbReference type="FunFam" id="1.10.1140.10:FF:000001">
    <property type="entry name" value="ATP synthase subunit beta"/>
    <property type="match status" value="1"/>
</dbReference>
<dbReference type="FunFam" id="2.40.10.170:FF:000003">
    <property type="entry name" value="ATP synthase subunit beta"/>
    <property type="match status" value="1"/>
</dbReference>
<dbReference type="FunFam" id="3.40.50.300:FF:000004">
    <property type="entry name" value="ATP synthase subunit beta"/>
    <property type="match status" value="1"/>
</dbReference>
<dbReference type="Gene3D" id="2.40.10.170">
    <property type="match status" value="1"/>
</dbReference>
<dbReference type="Gene3D" id="1.10.1140.10">
    <property type="entry name" value="Bovine Mitochondrial F1-atpase, Atp Synthase Beta Chain, Chain D, domain 3"/>
    <property type="match status" value="1"/>
</dbReference>
<dbReference type="Gene3D" id="3.40.50.300">
    <property type="entry name" value="P-loop containing nucleotide triphosphate hydrolases"/>
    <property type="match status" value="1"/>
</dbReference>
<dbReference type="HAMAP" id="MF_01347">
    <property type="entry name" value="ATP_synth_beta_bact"/>
    <property type="match status" value="1"/>
</dbReference>
<dbReference type="InterPro" id="IPR003593">
    <property type="entry name" value="AAA+_ATPase"/>
</dbReference>
<dbReference type="InterPro" id="IPR055190">
    <property type="entry name" value="ATP-synt_VA_C"/>
</dbReference>
<dbReference type="InterPro" id="IPR005722">
    <property type="entry name" value="ATP_synth_F1_bsu"/>
</dbReference>
<dbReference type="InterPro" id="IPR020003">
    <property type="entry name" value="ATPase_a/bsu_AS"/>
</dbReference>
<dbReference type="InterPro" id="IPR050053">
    <property type="entry name" value="ATPase_alpha/beta_chains"/>
</dbReference>
<dbReference type="InterPro" id="IPR004100">
    <property type="entry name" value="ATPase_F1/V1/A1_a/bsu_N"/>
</dbReference>
<dbReference type="InterPro" id="IPR036121">
    <property type="entry name" value="ATPase_F1/V1/A1_a/bsu_N_sf"/>
</dbReference>
<dbReference type="InterPro" id="IPR000194">
    <property type="entry name" value="ATPase_F1/V1/A1_a/bsu_nucl-bd"/>
</dbReference>
<dbReference type="InterPro" id="IPR024034">
    <property type="entry name" value="ATPase_F1/V1_b/a_C"/>
</dbReference>
<dbReference type="InterPro" id="IPR027417">
    <property type="entry name" value="P-loop_NTPase"/>
</dbReference>
<dbReference type="NCBIfam" id="TIGR01039">
    <property type="entry name" value="atpD"/>
    <property type="match status" value="1"/>
</dbReference>
<dbReference type="PANTHER" id="PTHR15184">
    <property type="entry name" value="ATP SYNTHASE"/>
    <property type="match status" value="1"/>
</dbReference>
<dbReference type="PANTHER" id="PTHR15184:SF71">
    <property type="entry name" value="ATP SYNTHASE SUBUNIT BETA, MITOCHONDRIAL"/>
    <property type="match status" value="1"/>
</dbReference>
<dbReference type="Pfam" id="PF00006">
    <property type="entry name" value="ATP-synt_ab"/>
    <property type="match status" value="1"/>
</dbReference>
<dbReference type="Pfam" id="PF02874">
    <property type="entry name" value="ATP-synt_ab_N"/>
    <property type="match status" value="1"/>
</dbReference>
<dbReference type="Pfam" id="PF22919">
    <property type="entry name" value="ATP-synt_VA_C"/>
    <property type="match status" value="1"/>
</dbReference>
<dbReference type="SMART" id="SM00382">
    <property type="entry name" value="AAA"/>
    <property type="match status" value="1"/>
</dbReference>
<dbReference type="SUPFAM" id="SSF47917">
    <property type="entry name" value="C-terminal domain of alpha and beta subunits of F1 ATP synthase"/>
    <property type="match status" value="1"/>
</dbReference>
<dbReference type="SUPFAM" id="SSF50615">
    <property type="entry name" value="N-terminal domain of alpha and beta subunits of F1 ATP synthase"/>
    <property type="match status" value="1"/>
</dbReference>
<dbReference type="SUPFAM" id="SSF52540">
    <property type="entry name" value="P-loop containing nucleoside triphosphate hydrolases"/>
    <property type="match status" value="1"/>
</dbReference>
<dbReference type="PROSITE" id="PS00152">
    <property type="entry name" value="ATPASE_ALPHA_BETA"/>
    <property type="match status" value="1"/>
</dbReference>
<organism>
    <name type="scientific">Histophilus somni (strain 129Pt)</name>
    <name type="common">Haemophilus somnus</name>
    <dbReference type="NCBI Taxonomy" id="205914"/>
    <lineage>
        <taxon>Bacteria</taxon>
        <taxon>Pseudomonadati</taxon>
        <taxon>Pseudomonadota</taxon>
        <taxon>Gammaproteobacteria</taxon>
        <taxon>Pasteurellales</taxon>
        <taxon>Pasteurellaceae</taxon>
        <taxon>Histophilus</taxon>
    </lineage>
</organism>